<protein>
    <recommendedName>
        <fullName evidence="1">Sulfate adenylyltransferase subunit 2</fullName>
        <ecNumber evidence="1">2.7.7.4</ecNumber>
    </recommendedName>
    <alternativeName>
        <fullName evidence="1">ATP-sulfurylase small subunit</fullName>
    </alternativeName>
    <alternativeName>
        <fullName evidence="1">Sulfate adenylate transferase</fullName>
        <shortName evidence="1">SAT</shortName>
    </alternativeName>
</protein>
<gene>
    <name evidence="1" type="primary">cysD</name>
    <name type="ordered locus">PputGB1_4546</name>
</gene>
<proteinExistence type="inferred from homology"/>
<dbReference type="EC" id="2.7.7.4" evidence="1"/>
<dbReference type="EMBL" id="CP000926">
    <property type="protein sequence ID" value="ABZ00433.1"/>
    <property type="molecule type" value="Genomic_DNA"/>
</dbReference>
<dbReference type="RefSeq" id="WP_003251799.1">
    <property type="nucleotide sequence ID" value="NC_010322.1"/>
</dbReference>
<dbReference type="SMR" id="B0KGN7"/>
<dbReference type="GeneID" id="83682263"/>
<dbReference type="KEGG" id="ppg:PputGB1_4546"/>
<dbReference type="eggNOG" id="COG0175">
    <property type="taxonomic scope" value="Bacteria"/>
</dbReference>
<dbReference type="HOGENOM" id="CLU_043026_0_0_6"/>
<dbReference type="UniPathway" id="UPA00140">
    <property type="reaction ID" value="UER00204"/>
</dbReference>
<dbReference type="Proteomes" id="UP000002157">
    <property type="component" value="Chromosome"/>
</dbReference>
<dbReference type="GO" id="GO:0005524">
    <property type="term" value="F:ATP binding"/>
    <property type="evidence" value="ECO:0007669"/>
    <property type="project" value="UniProtKB-KW"/>
</dbReference>
<dbReference type="GO" id="GO:0004781">
    <property type="term" value="F:sulfate adenylyltransferase (ATP) activity"/>
    <property type="evidence" value="ECO:0007669"/>
    <property type="project" value="UniProtKB-UniRule"/>
</dbReference>
<dbReference type="GO" id="GO:0070814">
    <property type="term" value="P:hydrogen sulfide biosynthetic process"/>
    <property type="evidence" value="ECO:0007669"/>
    <property type="project" value="UniProtKB-UniRule"/>
</dbReference>
<dbReference type="GO" id="GO:0000103">
    <property type="term" value="P:sulfate assimilation"/>
    <property type="evidence" value="ECO:0007669"/>
    <property type="project" value="UniProtKB-UniRule"/>
</dbReference>
<dbReference type="CDD" id="cd23946">
    <property type="entry name" value="Sulfate_adenylyltransferase_2"/>
    <property type="match status" value="1"/>
</dbReference>
<dbReference type="FunFam" id="3.40.50.620:FF:000002">
    <property type="entry name" value="Sulfate adenylyltransferase subunit 2"/>
    <property type="match status" value="1"/>
</dbReference>
<dbReference type="Gene3D" id="3.40.50.620">
    <property type="entry name" value="HUPs"/>
    <property type="match status" value="1"/>
</dbReference>
<dbReference type="HAMAP" id="MF_00064">
    <property type="entry name" value="Sulf_adenylyltr_sub2"/>
    <property type="match status" value="1"/>
</dbReference>
<dbReference type="InterPro" id="IPR002500">
    <property type="entry name" value="PAPS_reduct_dom"/>
</dbReference>
<dbReference type="InterPro" id="IPR014729">
    <property type="entry name" value="Rossmann-like_a/b/a_fold"/>
</dbReference>
<dbReference type="InterPro" id="IPR011784">
    <property type="entry name" value="SO4_adenylTrfase_ssu"/>
</dbReference>
<dbReference type="InterPro" id="IPR050128">
    <property type="entry name" value="Sulfate_adenylyltrnsfr_sub2"/>
</dbReference>
<dbReference type="NCBIfam" id="TIGR02039">
    <property type="entry name" value="CysD"/>
    <property type="match status" value="1"/>
</dbReference>
<dbReference type="NCBIfam" id="NF003587">
    <property type="entry name" value="PRK05253.1"/>
    <property type="match status" value="1"/>
</dbReference>
<dbReference type="NCBIfam" id="NF009214">
    <property type="entry name" value="PRK12563.1"/>
    <property type="match status" value="1"/>
</dbReference>
<dbReference type="PANTHER" id="PTHR43196">
    <property type="entry name" value="SULFATE ADENYLYLTRANSFERASE SUBUNIT 2"/>
    <property type="match status" value="1"/>
</dbReference>
<dbReference type="PANTHER" id="PTHR43196:SF1">
    <property type="entry name" value="SULFATE ADENYLYLTRANSFERASE SUBUNIT 2"/>
    <property type="match status" value="1"/>
</dbReference>
<dbReference type="Pfam" id="PF01507">
    <property type="entry name" value="PAPS_reduct"/>
    <property type="match status" value="1"/>
</dbReference>
<dbReference type="PIRSF" id="PIRSF002936">
    <property type="entry name" value="CysDAde_trans"/>
    <property type="match status" value="1"/>
</dbReference>
<dbReference type="SUPFAM" id="SSF52402">
    <property type="entry name" value="Adenine nucleotide alpha hydrolases-like"/>
    <property type="match status" value="1"/>
</dbReference>
<comment type="function">
    <text evidence="1">With CysN forms the ATP sulfurylase (ATPS) that catalyzes the adenylation of sulfate producing adenosine 5'-phosphosulfate (APS) and diphosphate, the first enzymatic step in sulfur assimilation pathway. APS synthesis involves the formation of a high-energy phosphoric-sulfuric acid anhydride bond driven by GTP hydrolysis by CysN coupled to ATP hydrolysis by CysD.</text>
</comment>
<comment type="catalytic activity">
    <reaction evidence="1">
        <text>sulfate + ATP + H(+) = adenosine 5'-phosphosulfate + diphosphate</text>
        <dbReference type="Rhea" id="RHEA:18133"/>
        <dbReference type="ChEBI" id="CHEBI:15378"/>
        <dbReference type="ChEBI" id="CHEBI:16189"/>
        <dbReference type="ChEBI" id="CHEBI:30616"/>
        <dbReference type="ChEBI" id="CHEBI:33019"/>
        <dbReference type="ChEBI" id="CHEBI:58243"/>
        <dbReference type="EC" id="2.7.7.4"/>
    </reaction>
</comment>
<comment type="pathway">
    <text evidence="1">Sulfur metabolism; hydrogen sulfide biosynthesis; sulfite from sulfate: step 1/3.</text>
</comment>
<comment type="subunit">
    <text evidence="1">Heterodimer composed of CysD, the smaller subunit, and CysN.</text>
</comment>
<comment type="similarity">
    <text evidence="1">Belongs to the PAPS reductase family. CysD subfamily.</text>
</comment>
<name>CYSD_PSEPG</name>
<evidence type="ECO:0000255" key="1">
    <source>
        <dbReference type="HAMAP-Rule" id="MF_00064"/>
    </source>
</evidence>
<keyword id="KW-0067">ATP-binding</keyword>
<keyword id="KW-0547">Nucleotide-binding</keyword>
<keyword id="KW-0548">Nucleotidyltransferase</keyword>
<keyword id="KW-0808">Transferase</keyword>
<sequence>MVDKLTHLKQLEAESIHIIREVAAEFDNPVMLYSIGKDSAVMLHLARKAFFPGKLPFPVMHVDTQWKFQEMYSFRDKMVEEMGLELITHVNPEGVAQGINPFTHGSSKHTDIMKTQGLKQALDKHGFDAAFGGARRDEEKSRAKERVYSFRDSKHRWDPKNQRPELWNVYNGKVNKGESIRVFPLSNWTELDIWQYIYLEGIPIVPLYFAAEREVIEKNGTLIMIDDERILEHLSEEEKARIVKKKVRFRTLGCYPLTGAVESEAETLTDIIQEMLLTRTSERQGRVIDHDGAGSMEDKKRQGYF</sequence>
<organism>
    <name type="scientific">Pseudomonas putida (strain GB-1)</name>
    <dbReference type="NCBI Taxonomy" id="76869"/>
    <lineage>
        <taxon>Bacteria</taxon>
        <taxon>Pseudomonadati</taxon>
        <taxon>Pseudomonadota</taxon>
        <taxon>Gammaproteobacteria</taxon>
        <taxon>Pseudomonadales</taxon>
        <taxon>Pseudomonadaceae</taxon>
        <taxon>Pseudomonas</taxon>
    </lineage>
</organism>
<feature type="chain" id="PRO_1000075079" description="Sulfate adenylyltransferase subunit 2">
    <location>
        <begin position="1"/>
        <end position="305"/>
    </location>
</feature>
<accession>B0KGN7</accession>
<reference key="1">
    <citation type="submission" date="2008-01" db="EMBL/GenBank/DDBJ databases">
        <title>Complete sequence of Pseudomonas putida GB-1.</title>
        <authorList>
            <consortium name="US DOE Joint Genome Institute"/>
            <person name="Copeland A."/>
            <person name="Lucas S."/>
            <person name="Lapidus A."/>
            <person name="Barry K."/>
            <person name="Glavina del Rio T."/>
            <person name="Dalin E."/>
            <person name="Tice H."/>
            <person name="Pitluck S."/>
            <person name="Bruce D."/>
            <person name="Goodwin L."/>
            <person name="Chertkov O."/>
            <person name="Brettin T."/>
            <person name="Detter J.C."/>
            <person name="Han C."/>
            <person name="Kuske C.R."/>
            <person name="Schmutz J."/>
            <person name="Larimer F."/>
            <person name="Land M."/>
            <person name="Hauser L."/>
            <person name="Kyrpides N."/>
            <person name="Kim E."/>
            <person name="McCarthy J.K."/>
            <person name="Richardson P."/>
        </authorList>
    </citation>
    <scope>NUCLEOTIDE SEQUENCE [LARGE SCALE GENOMIC DNA]</scope>
    <source>
        <strain>GB-1</strain>
    </source>
</reference>